<sequence length="161" mass="18997">MSIEIRKLSIEDLETLIEVARESWKWTYAGIYSEEYIESWIREKYSKEKLLNEIVRSQSNLDILFLGAFADSTLIGFIELKIIANKAELLRLYLKPEYTHKKIGKTLLLEAEKIMKKKGILECRLYVHRQNSVGFSFYYKNGFKVEDTDGSDFIMEKKYES</sequence>
<comment type="function">
    <text evidence="4 5">Involved in the protection against polyamine toxicity by regulating their concentration. Could also be involved in the negative control of sporulation as well as production of degradative enzymes such as alpha-amylase, levansucrase and alkaline phosphatase. Catalyzes the transfer of an acetyl group from acetyl coenzyme A (AcCoA) to an acceptor substrate and release both CoA and the acetylated product. It can use a variety of substrates including spermidine, L-tryptophan, L-leucine, L-lysine, dopamine and tyramine.</text>
</comment>
<comment type="catalytic activity">
    <reaction evidence="4">
        <text>an alkane-alpha,omega-diamine + acetyl-CoA = an N-acetylalkane-alpha,omega-diamine + CoA + H(+)</text>
        <dbReference type="Rhea" id="RHEA:11116"/>
        <dbReference type="Rhea" id="RHEA-COMP:9766"/>
        <dbReference type="Rhea" id="RHEA-COMP:9767"/>
        <dbReference type="ChEBI" id="CHEBI:15378"/>
        <dbReference type="ChEBI" id="CHEBI:57287"/>
        <dbReference type="ChEBI" id="CHEBI:57288"/>
        <dbReference type="ChEBI" id="CHEBI:70977"/>
        <dbReference type="ChEBI" id="CHEBI:70988"/>
        <dbReference type="EC" id="2.3.1.57"/>
    </reaction>
</comment>
<comment type="biophysicochemical properties">
    <kinetics>
        <text evidence="4">kcat is 42 min(-1) for acetyltransferase activity with acetylspermidine as substrate (at pH 8.3). kcat is 31 min(-1) for acetyltransferase activity with AcCoA as substrate (at pH 8.3).</text>
    </kinetics>
</comment>
<comment type="subunit">
    <text evidence="4">Monomer or homodimer.</text>
</comment>
<comment type="similarity">
    <text evidence="7">Belongs to the acetyltransferase family.</text>
</comment>
<organism>
    <name type="scientific">Thermoplasma acidophilum (strain ATCC 25905 / DSM 1728 / JCM 9062 / NBRC 15155 / AMRC-C165)</name>
    <dbReference type="NCBI Taxonomy" id="273075"/>
    <lineage>
        <taxon>Archaea</taxon>
        <taxon>Methanobacteriati</taxon>
        <taxon>Thermoplasmatota</taxon>
        <taxon>Thermoplasmata</taxon>
        <taxon>Thermoplasmatales</taxon>
        <taxon>Thermoplasmataceae</taxon>
        <taxon>Thermoplasma</taxon>
    </lineage>
</organism>
<reference key="1">
    <citation type="journal article" date="2000" name="Nature">
        <title>The genome sequence of the thermoacidophilic scavenger Thermoplasma acidophilum.</title>
        <authorList>
            <person name="Ruepp A."/>
            <person name="Graml W."/>
            <person name="Santos-Martinez M.-L."/>
            <person name="Koretke K.K."/>
            <person name="Volker C."/>
            <person name="Mewes H.-W."/>
            <person name="Frishman D."/>
            <person name="Stocker S."/>
            <person name="Lupas A.N."/>
            <person name="Baumeister W."/>
        </authorList>
    </citation>
    <scope>NUCLEOTIDE SEQUENCE [LARGE SCALE GENOMIC DNA]</scope>
    <source>
        <strain>ATCC 25905 / DSM 1728 / JCM 9062 / NBRC 15155 / AMRC-C165</strain>
    </source>
</reference>
<reference key="2">
    <citation type="journal article" date="2013" name="Protein Sci.">
        <title>Broad-substrate screen as a tool to identify substrates for bacterial Gcn5-related N-acetyltransferases with unknown substrate specificity.</title>
        <authorList>
            <person name="Kuhn M.L."/>
            <person name="Majorek K.A."/>
            <person name="Minor W."/>
            <person name="Anderson W.F."/>
        </authorList>
    </citation>
    <scope>FUNCTION</scope>
    <scope>SUBSTRATE SPECIFICITY</scope>
</reference>
<reference evidence="8 9 10 11" key="3">
    <citation type="journal article" date="2011" name="Proteins">
        <title>Crystal structure of the novel PaiA N-acetyltransferase from Thermoplasma acidophilum involved in the negative control of sporulation and degradative enzyme production.</title>
        <authorList>
            <consortium name="Midwest center for structural genomics (MCSG)"/>
        </authorList>
    </citation>
    <scope>X-RAY CRYSTALLOGRAPHY (2.30 ANGSTROMS) OF 1-159 IN COMPLEX WITH COENZYME A</scope>
    <scope>FUNCTION</scope>
    <scope>CATALYTIC ACTIVITY</scope>
    <scope>BIOPHYSICOCHEMICAL PROPERTIES</scope>
    <scope>SUBUNIT</scope>
    <scope>SUBSTRATE SPECIFICITY</scope>
</reference>
<protein>
    <recommendedName>
        <fullName evidence="6">Spermidine N(1)-acetyltransferase</fullName>
        <shortName evidence="6">SAT</shortName>
        <ecNumber evidence="4">2.3.1.57</ecNumber>
    </recommendedName>
    <alternativeName>
        <fullName evidence="7">GCN5-related N-acetyltransferase</fullName>
        <shortName evidence="7">GNAT</shortName>
    </alternativeName>
    <alternativeName>
        <fullName evidence="6">Protease synthase and sporulation negative regulatory protein PAI 1</fullName>
    </alternativeName>
</protein>
<feature type="chain" id="PRO_0000433397" description="Spermidine N(1)-acetyltransferase">
    <location>
        <begin position="1"/>
        <end position="161"/>
    </location>
</feature>
<feature type="domain" description="N-acetyltransferase" evidence="3">
    <location>
        <begin position="3"/>
        <end position="160"/>
    </location>
</feature>
<feature type="active site" description="Proton donor" evidence="1">
    <location>
        <position position="138"/>
    </location>
</feature>
<feature type="binding site" evidence="4">
    <location>
        <begin position="92"/>
        <end position="94"/>
    </location>
    <ligand>
        <name>acetyl-CoA</name>
        <dbReference type="ChEBI" id="CHEBI:57288"/>
    </ligand>
</feature>
<feature type="binding site" evidence="4">
    <location>
        <begin position="99"/>
        <end position="104"/>
    </location>
    <ligand>
        <name>acetyl-CoA</name>
        <dbReference type="ChEBI" id="CHEBI:57288"/>
    </ligand>
</feature>
<feature type="binding site" evidence="4">
    <location>
        <position position="131"/>
    </location>
    <ligand>
        <name>acetyl-CoA</name>
        <dbReference type="ChEBI" id="CHEBI:57288"/>
    </ligand>
</feature>
<feature type="binding site" evidence="4">
    <location>
        <position position="136"/>
    </location>
    <ligand>
        <name>acetyl-CoA</name>
        <dbReference type="ChEBI" id="CHEBI:57288"/>
    </ligand>
</feature>
<feature type="binding site" evidence="4">
    <location>
        <position position="140"/>
    </location>
    <ligand>
        <name>acetyl-CoA</name>
        <dbReference type="ChEBI" id="CHEBI:57288"/>
    </ligand>
</feature>
<feature type="site" description="May have an important role in the acetylation of the polyamine" evidence="2">
    <location>
        <position position="142"/>
    </location>
</feature>
<feature type="strand" evidence="12">
    <location>
        <begin position="3"/>
        <end position="7"/>
    </location>
</feature>
<feature type="helix" evidence="12">
    <location>
        <begin position="10"/>
        <end position="12"/>
    </location>
</feature>
<feature type="helix" evidence="12">
    <location>
        <begin position="13"/>
        <end position="28"/>
    </location>
</feature>
<feature type="turn" evidence="12">
    <location>
        <begin position="29"/>
        <end position="31"/>
    </location>
</feature>
<feature type="helix" evidence="12">
    <location>
        <begin position="34"/>
        <end position="44"/>
    </location>
</feature>
<feature type="helix" evidence="12">
    <location>
        <begin position="47"/>
        <end position="58"/>
    </location>
</feature>
<feature type="strand" evidence="12">
    <location>
        <begin position="61"/>
        <end position="70"/>
    </location>
</feature>
<feature type="strand" evidence="12">
    <location>
        <begin position="73"/>
        <end position="83"/>
    </location>
</feature>
<feature type="strand" evidence="12">
    <location>
        <begin position="86"/>
        <end position="94"/>
    </location>
</feature>
<feature type="helix" evidence="12">
    <location>
        <begin position="96"/>
        <end position="98"/>
    </location>
</feature>
<feature type="helix" evidence="12">
    <location>
        <begin position="101"/>
        <end position="118"/>
    </location>
</feature>
<feature type="strand" evidence="12">
    <location>
        <begin position="122"/>
        <end position="128"/>
    </location>
</feature>
<feature type="helix" evidence="12">
    <location>
        <begin position="132"/>
        <end position="140"/>
    </location>
</feature>
<feature type="strand" evidence="12">
    <location>
        <begin position="144"/>
        <end position="148"/>
    </location>
</feature>
<feature type="strand" evidence="12">
    <location>
        <begin position="150"/>
        <end position="158"/>
    </location>
</feature>
<proteinExistence type="evidence at protein level"/>
<gene>
    <name evidence="6" type="primary">paiA</name>
    <name type="ordered locus">Ta0374</name>
</gene>
<evidence type="ECO:0000250" key="1">
    <source>
        <dbReference type="UniProtKB" id="P0A951"/>
    </source>
</evidence>
<evidence type="ECO:0000250" key="2">
    <source>
        <dbReference type="UniProtKB" id="P21340"/>
    </source>
</evidence>
<evidence type="ECO:0000255" key="3">
    <source>
        <dbReference type="PROSITE-ProRule" id="PRU00532"/>
    </source>
</evidence>
<evidence type="ECO:0000269" key="4">
    <source>
    </source>
</evidence>
<evidence type="ECO:0000269" key="5">
    <source>
    </source>
</evidence>
<evidence type="ECO:0000303" key="6">
    <source>
    </source>
</evidence>
<evidence type="ECO:0000305" key="7"/>
<evidence type="ECO:0007744" key="8">
    <source>
        <dbReference type="PDB" id="3F0A"/>
    </source>
</evidence>
<evidence type="ECO:0007744" key="9">
    <source>
        <dbReference type="PDB" id="3FIX"/>
    </source>
</evidence>
<evidence type="ECO:0007744" key="10">
    <source>
        <dbReference type="PDB" id="3K9U"/>
    </source>
</evidence>
<evidence type="ECO:0007744" key="11">
    <source>
        <dbReference type="PDB" id="3NE7"/>
    </source>
</evidence>
<evidence type="ECO:0007829" key="12">
    <source>
        <dbReference type="PDB" id="3FIX"/>
    </source>
</evidence>
<keyword id="KW-0002">3D-structure</keyword>
<keyword id="KW-0012">Acyltransferase</keyword>
<keyword id="KW-1185">Reference proteome</keyword>
<keyword id="KW-0808">Transferase</keyword>
<name>PAIA_THEAC</name>
<accession>Q9HL57</accession>
<dbReference type="EC" id="2.3.1.57" evidence="4"/>
<dbReference type="EMBL" id="AL445064">
    <property type="protein sequence ID" value="CAC11518.1"/>
    <property type="molecule type" value="Genomic_DNA"/>
</dbReference>
<dbReference type="RefSeq" id="WP_010900802.1">
    <property type="nucleotide sequence ID" value="NC_002578.1"/>
</dbReference>
<dbReference type="PDB" id="3F0A">
    <property type="method" value="X-ray"/>
    <property type="resolution" value="2.50 A"/>
    <property type="chains" value="A=1-159"/>
</dbReference>
<dbReference type="PDB" id="3FIX">
    <property type="method" value="X-ray"/>
    <property type="resolution" value="2.30 A"/>
    <property type="chains" value="A/B/C/D=1-159"/>
</dbReference>
<dbReference type="PDB" id="3K9U">
    <property type="method" value="X-ray"/>
    <property type="resolution" value="2.30 A"/>
    <property type="chains" value="A/B=1-159"/>
</dbReference>
<dbReference type="PDB" id="3NE7">
    <property type="method" value="X-ray"/>
    <property type="resolution" value="2.30 A"/>
    <property type="chains" value="A=1-159"/>
</dbReference>
<dbReference type="PDBsum" id="3F0A"/>
<dbReference type="PDBsum" id="3FIX"/>
<dbReference type="PDBsum" id="3K9U"/>
<dbReference type="PDBsum" id="3NE7"/>
<dbReference type="SMR" id="Q9HL57"/>
<dbReference type="STRING" id="273075.gene:9571593"/>
<dbReference type="PaxDb" id="273075-Ta0374"/>
<dbReference type="EnsemblBacteria" id="CAC11518">
    <property type="protein sequence ID" value="CAC11518"/>
    <property type="gene ID" value="CAC11518"/>
</dbReference>
<dbReference type="GeneID" id="41587478"/>
<dbReference type="KEGG" id="tac:Ta0374"/>
<dbReference type="eggNOG" id="arCOG00844">
    <property type="taxonomic scope" value="Archaea"/>
</dbReference>
<dbReference type="HOGENOM" id="CLU_013985_18_3_2"/>
<dbReference type="InParanoid" id="Q9HL57"/>
<dbReference type="OrthoDB" id="55606at2157"/>
<dbReference type="BRENDA" id="2.3.1.57">
    <property type="organism ID" value="6324"/>
</dbReference>
<dbReference type="EvolutionaryTrace" id="Q9HL57"/>
<dbReference type="Proteomes" id="UP000001024">
    <property type="component" value="Chromosome"/>
</dbReference>
<dbReference type="GO" id="GO:0004145">
    <property type="term" value="F:diamine N-acetyltransferase activity"/>
    <property type="evidence" value="ECO:0000314"/>
    <property type="project" value="UniProtKB"/>
</dbReference>
<dbReference type="GO" id="GO:0043939">
    <property type="term" value="P:negative regulation of sporulation"/>
    <property type="evidence" value="ECO:0000303"/>
    <property type="project" value="UniProtKB"/>
</dbReference>
<dbReference type="CDD" id="cd04301">
    <property type="entry name" value="NAT_SF"/>
    <property type="match status" value="1"/>
</dbReference>
<dbReference type="Gene3D" id="3.40.630.30">
    <property type="match status" value="1"/>
</dbReference>
<dbReference type="InterPro" id="IPR016181">
    <property type="entry name" value="Acyl_CoA_acyltransferase"/>
</dbReference>
<dbReference type="InterPro" id="IPR000182">
    <property type="entry name" value="GNAT_dom"/>
</dbReference>
<dbReference type="InterPro" id="IPR050276">
    <property type="entry name" value="MshD_Acetyltransferase"/>
</dbReference>
<dbReference type="PANTHER" id="PTHR43617">
    <property type="entry name" value="L-AMINO ACID N-ACETYLTRANSFERASE"/>
    <property type="match status" value="1"/>
</dbReference>
<dbReference type="Pfam" id="PF00583">
    <property type="entry name" value="Acetyltransf_1"/>
    <property type="match status" value="1"/>
</dbReference>
<dbReference type="SUPFAM" id="SSF55729">
    <property type="entry name" value="Acyl-CoA N-acyltransferases (Nat)"/>
    <property type="match status" value="1"/>
</dbReference>
<dbReference type="PROSITE" id="PS51186">
    <property type="entry name" value="GNAT"/>
    <property type="match status" value="1"/>
</dbReference>